<evidence type="ECO:0000255" key="1">
    <source>
        <dbReference type="HAMAP-Rule" id="MF_00059"/>
    </source>
</evidence>
<keyword id="KW-0240">DNA-directed RNA polymerase</keyword>
<keyword id="KW-0548">Nucleotidyltransferase</keyword>
<keyword id="KW-1185">Reference proteome</keyword>
<keyword id="KW-0804">Transcription</keyword>
<keyword id="KW-0808">Transferase</keyword>
<organism>
    <name type="scientific">Haemophilus influenzae (strain ATCC 51907 / DSM 11121 / KW20 / Rd)</name>
    <dbReference type="NCBI Taxonomy" id="71421"/>
    <lineage>
        <taxon>Bacteria</taxon>
        <taxon>Pseudomonadati</taxon>
        <taxon>Pseudomonadota</taxon>
        <taxon>Gammaproteobacteria</taxon>
        <taxon>Pasteurellales</taxon>
        <taxon>Pasteurellaceae</taxon>
        <taxon>Haemophilus</taxon>
    </lineage>
</organism>
<reference key="1">
    <citation type="journal article" date="1995" name="Science">
        <title>Whole-genome random sequencing and assembly of Haemophilus influenzae Rd.</title>
        <authorList>
            <person name="Fleischmann R.D."/>
            <person name="Adams M.D."/>
            <person name="White O."/>
            <person name="Clayton R.A."/>
            <person name="Kirkness E.F."/>
            <person name="Kerlavage A.R."/>
            <person name="Bult C.J."/>
            <person name="Tomb J.-F."/>
            <person name="Dougherty B.A."/>
            <person name="Merrick J.M."/>
            <person name="McKenney K."/>
            <person name="Sutton G.G."/>
            <person name="FitzHugh W."/>
            <person name="Fields C.A."/>
            <person name="Gocayne J.D."/>
            <person name="Scott J.D."/>
            <person name="Shirley R."/>
            <person name="Liu L.-I."/>
            <person name="Glodek A."/>
            <person name="Kelley J.M."/>
            <person name="Weidman J.F."/>
            <person name="Phillips C.A."/>
            <person name="Spriggs T."/>
            <person name="Hedblom E."/>
            <person name="Cotton M.D."/>
            <person name="Utterback T.R."/>
            <person name="Hanna M.C."/>
            <person name="Nguyen D.T."/>
            <person name="Saudek D.M."/>
            <person name="Brandon R.C."/>
            <person name="Fine L.D."/>
            <person name="Fritchman J.L."/>
            <person name="Fuhrmann J.L."/>
            <person name="Geoghagen N.S.M."/>
            <person name="Gnehm C.L."/>
            <person name="McDonald L.A."/>
            <person name="Small K.V."/>
            <person name="Fraser C.M."/>
            <person name="Smith H.O."/>
            <person name="Venter J.C."/>
        </authorList>
    </citation>
    <scope>NUCLEOTIDE SEQUENCE [LARGE SCALE GENOMIC DNA]</scope>
    <source>
        <strain>ATCC 51907 / DSM 11121 / KW20 / Rd</strain>
    </source>
</reference>
<sequence length="328" mass="36414">MQGSVTEFLKPRLVDIEQISSTHAKVILEPLERGFGHTLGNALRRILLSSMPGCAVTEVEIDGVLHEYSSKEGVQEDILEVLLNLKGLAVKVQNKDDVILTLNKSGIGPVVAADITYDGDVEIVNPDHVICHLTDENASISMRIRVQRGRGYVPASSRTHTQEERPIGRLLVDACYSPVERIAYNVEAARVEQRTDLDKLVIELETNGALEPEEAIRRAATILAEQLDAFVDLRDVRQPEIKEEKPEFXPILLRPVDDLELTVRSANCLKAETIHYIGDLVQRTEVELLKTPNLGKKSLTEIKDVLASRGLSLGMRLENWPPASIAED</sequence>
<feature type="chain" id="PRO_0000175314" description="DNA-directed RNA polymerase subunit alpha">
    <location>
        <begin position="1"/>
        <end position="328"/>
    </location>
</feature>
<feature type="region of interest" description="Alpha N-terminal domain (alpha-NTD)" evidence="1">
    <location>
        <begin position="1"/>
        <end position="234"/>
    </location>
</feature>
<feature type="region of interest" description="Alpha C-terminal domain (alpha-CTD)" evidence="1">
    <location>
        <begin position="248"/>
        <end position="328"/>
    </location>
</feature>
<dbReference type="EC" id="2.7.7.6" evidence="1"/>
<dbReference type="EMBL" id="L42023">
    <property type="protein sequence ID" value="AAC22461.1"/>
    <property type="molecule type" value="Genomic_DNA"/>
</dbReference>
<dbReference type="PIR" id="B64095">
    <property type="entry name" value="B64095"/>
</dbReference>
<dbReference type="RefSeq" id="NP_438962.1">
    <property type="nucleotide sequence ID" value="NC_000907.1"/>
</dbReference>
<dbReference type="STRING" id="71421.HI_0802"/>
<dbReference type="EnsemblBacteria" id="AAC22461">
    <property type="protein sequence ID" value="AAC22461"/>
    <property type="gene ID" value="HI_0802"/>
</dbReference>
<dbReference type="KEGG" id="hin:HI_0802"/>
<dbReference type="PATRIC" id="fig|71421.8.peg.842"/>
<dbReference type="eggNOG" id="COG0202">
    <property type="taxonomic scope" value="Bacteria"/>
</dbReference>
<dbReference type="HOGENOM" id="CLU_053084_0_0_6"/>
<dbReference type="OrthoDB" id="9805706at2"/>
<dbReference type="PhylomeDB" id="P43737"/>
<dbReference type="BioCyc" id="HINF71421:G1GJ1-843-MONOMER"/>
<dbReference type="Proteomes" id="UP000000579">
    <property type="component" value="Chromosome"/>
</dbReference>
<dbReference type="GO" id="GO:0005737">
    <property type="term" value="C:cytoplasm"/>
    <property type="evidence" value="ECO:0000318"/>
    <property type="project" value="GO_Central"/>
</dbReference>
<dbReference type="GO" id="GO:0000428">
    <property type="term" value="C:DNA-directed RNA polymerase complex"/>
    <property type="evidence" value="ECO:0007669"/>
    <property type="project" value="UniProtKB-KW"/>
</dbReference>
<dbReference type="GO" id="GO:0003677">
    <property type="term" value="F:DNA binding"/>
    <property type="evidence" value="ECO:0007669"/>
    <property type="project" value="UniProtKB-UniRule"/>
</dbReference>
<dbReference type="GO" id="GO:0003899">
    <property type="term" value="F:DNA-directed RNA polymerase activity"/>
    <property type="evidence" value="ECO:0007669"/>
    <property type="project" value="UniProtKB-UniRule"/>
</dbReference>
<dbReference type="GO" id="GO:0046983">
    <property type="term" value="F:protein dimerization activity"/>
    <property type="evidence" value="ECO:0007669"/>
    <property type="project" value="InterPro"/>
</dbReference>
<dbReference type="GO" id="GO:0006351">
    <property type="term" value="P:DNA-templated transcription"/>
    <property type="evidence" value="ECO:0007669"/>
    <property type="project" value="UniProtKB-UniRule"/>
</dbReference>
<dbReference type="CDD" id="cd06928">
    <property type="entry name" value="RNAP_alpha_NTD"/>
    <property type="match status" value="1"/>
</dbReference>
<dbReference type="FunFam" id="1.10.150.20:FF:000001">
    <property type="entry name" value="DNA-directed RNA polymerase subunit alpha"/>
    <property type="match status" value="1"/>
</dbReference>
<dbReference type="FunFam" id="2.170.120.12:FF:000001">
    <property type="entry name" value="DNA-directed RNA polymerase subunit alpha"/>
    <property type="match status" value="1"/>
</dbReference>
<dbReference type="Gene3D" id="1.10.150.20">
    <property type="entry name" value="5' to 3' exonuclease, C-terminal subdomain"/>
    <property type="match status" value="1"/>
</dbReference>
<dbReference type="Gene3D" id="2.170.120.12">
    <property type="entry name" value="DNA-directed RNA polymerase, insert domain"/>
    <property type="match status" value="1"/>
</dbReference>
<dbReference type="Gene3D" id="3.30.1360.10">
    <property type="entry name" value="RNA polymerase, RBP11-like subunit"/>
    <property type="match status" value="1"/>
</dbReference>
<dbReference type="HAMAP" id="MF_00059">
    <property type="entry name" value="RNApol_bact_RpoA"/>
    <property type="match status" value="1"/>
</dbReference>
<dbReference type="InterPro" id="IPR011262">
    <property type="entry name" value="DNA-dir_RNA_pol_insert"/>
</dbReference>
<dbReference type="InterPro" id="IPR011263">
    <property type="entry name" value="DNA-dir_RNA_pol_RpoA/D/Rpb3"/>
</dbReference>
<dbReference type="InterPro" id="IPR011773">
    <property type="entry name" value="DNA-dir_RpoA"/>
</dbReference>
<dbReference type="InterPro" id="IPR036603">
    <property type="entry name" value="RBP11-like"/>
</dbReference>
<dbReference type="InterPro" id="IPR011260">
    <property type="entry name" value="RNAP_asu_C"/>
</dbReference>
<dbReference type="InterPro" id="IPR036643">
    <property type="entry name" value="RNApol_insert_sf"/>
</dbReference>
<dbReference type="NCBIfam" id="NF003513">
    <property type="entry name" value="PRK05182.1-2"/>
    <property type="match status" value="1"/>
</dbReference>
<dbReference type="NCBIfam" id="NF003519">
    <property type="entry name" value="PRK05182.2-5"/>
    <property type="match status" value="1"/>
</dbReference>
<dbReference type="NCBIfam" id="TIGR02027">
    <property type="entry name" value="rpoA"/>
    <property type="match status" value="1"/>
</dbReference>
<dbReference type="Pfam" id="PF01000">
    <property type="entry name" value="RNA_pol_A_bac"/>
    <property type="match status" value="1"/>
</dbReference>
<dbReference type="Pfam" id="PF03118">
    <property type="entry name" value="RNA_pol_A_CTD"/>
    <property type="match status" value="1"/>
</dbReference>
<dbReference type="Pfam" id="PF01193">
    <property type="entry name" value="RNA_pol_L"/>
    <property type="match status" value="1"/>
</dbReference>
<dbReference type="SMART" id="SM00662">
    <property type="entry name" value="RPOLD"/>
    <property type="match status" value="1"/>
</dbReference>
<dbReference type="SUPFAM" id="SSF47789">
    <property type="entry name" value="C-terminal domain of RNA polymerase alpha subunit"/>
    <property type="match status" value="1"/>
</dbReference>
<dbReference type="SUPFAM" id="SSF56553">
    <property type="entry name" value="Insert subdomain of RNA polymerase alpha subunit"/>
    <property type="match status" value="1"/>
</dbReference>
<dbReference type="SUPFAM" id="SSF55257">
    <property type="entry name" value="RBP11-like subunits of RNA polymerase"/>
    <property type="match status" value="1"/>
</dbReference>
<name>RPOA_HAEIN</name>
<proteinExistence type="inferred from homology"/>
<comment type="function">
    <text evidence="1">DNA-dependent RNA polymerase catalyzes the transcription of DNA into RNA using the four ribonucleoside triphosphates as substrates.</text>
</comment>
<comment type="catalytic activity">
    <reaction evidence="1">
        <text>RNA(n) + a ribonucleoside 5'-triphosphate = RNA(n+1) + diphosphate</text>
        <dbReference type="Rhea" id="RHEA:21248"/>
        <dbReference type="Rhea" id="RHEA-COMP:14527"/>
        <dbReference type="Rhea" id="RHEA-COMP:17342"/>
        <dbReference type="ChEBI" id="CHEBI:33019"/>
        <dbReference type="ChEBI" id="CHEBI:61557"/>
        <dbReference type="ChEBI" id="CHEBI:140395"/>
        <dbReference type="EC" id="2.7.7.6"/>
    </reaction>
</comment>
<comment type="subunit">
    <text evidence="1">Homodimer. The RNAP catalytic core consists of 2 alpha, 1 beta, 1 beta' and 1 omega subunit. When a sigma factor is associated with the core the holoenzyme is formed, which can initiate transcription.</text>
</comment>
<comment type="domain">
    <text evidence="1">The N-terminal domain is essential for RNAP assembly and basal transcription, whereas the C-terminal domain is involved in interaction with transcriptional regulators and with upstream promoter elements.</text>
</comment>
<comment type="similarity">
    <text evidence="1">Belongs to the RNA polymerase alpha chain family.</text>
</comment>
<gene>
    <name evidence="1" type="primary">rpoA</name>
    <name type="ordered locus">HI_0802</name>
</gene>
<accession>P43737</accession>
<protein>
    <recommendedName>
        <fullName evidence="1">DNA-directed RNA polymerase subunit alpha</fullName>
        <shortName evidence="1">RNAP subunit alpha</shortName>
        <ecNumber evidence="1">2.7.7.6</ecNumber>
    </recommendedName>
    <alternativeName>
        <fullName evidence="1">RNA polymerase subunit alpha</fullName>
    </alternativeName>
    <alternativeName>
        <fullName evidence="1">Transcriptase subunit alpha</fullName>
    </alternativeName>
</protein>